<reference key="1">
    <citation type="journal article" date="2007" name="BMC Microbiol.">
        <title>Subtle genetic changes enhance virulence of methicillin resistant and sensitive Staphylococcus aureus.</title>
        <authorList>
            <person name="Highlander S.K."/>
            <person name="Hulten K.G."/>
            <person name="Qin X."/>
            <person name="Jiang H."/>
            <person name="Yerrapragada S."/>
            <person name="Mason E.O. Jr."/>
            <person name="Shang Y."/>
            <person name="Williams T.M."/>
            <person name="Fortunov R.M."/>
            <person name="Liu Y."/>
            <person name="Igboeli O."/>
            <person name="Petrosino J."/>
            <person name="Tirumalai M."/>
            <person name="Uzman A."/>
            <person name="Fox G.E."/>
            <person name="Cardenas A.M."/>
            <person name="Muzny D.M."/>
            <person name="Hemphill L."/>
            <person name="Ding Y."/>
            <person name="Dugan S."/>
            <person name="Blyth P.R."/>
            <person name="Buhay C.J."/>
            <person name="Dinh H.H."/>
            <person name="Hawes A.C."/>
            <person name="Holder M."/>
            <person name="Kovar C.L."/>
            <person name="Lee S.L."/>
            <person name="Liu W."/>
            <person name="Nazareth L.V."/>
            <person name="Wang Q."/>
            <person name="Zhou J."/>
            <person name="Kaplan S.L."/>
            <person name="Weinstock G.M."/>
        </authorList>
    </citation>
    <scope>NUCLEOTIDE SEQUENCE [LARGE SCALE GENOMIC DNA]</scope>
    <source>
        <strain>USA300 / TCH1516</strain>
    </source>
</reference>
<name>WALK_STAAT</name>
<accession>A8YYU2</accession>
<proteinExistence type="inferred from homology"/>
<evidence type="ECO:0000250" key="1">
    <source>
        <dbReference type="UniProtKB" id="O34206"/>
    </source>
</evidence>
<evidence type="ECO:0000250" key="2">
    <source>
        <dbReference type="UniProtKB" id="Q2G2U4"/>
    </source>
</evidence>
<evidence type="ECO:0000250" key="3">
    <source>
        <dbReference type="UniProtKB" id="Q9RDT3"/>
    </source>
</evidence>
<evidence type="ECO:0000255" key="4"/>
<evidence type="ECO:0000255" key="5">
    <source>
        <dbReference type="PROSITE-ProRule" id="PRU00102"/>
    </source>
</evidence>
<evidence type="ECO:0000255" key="6">
    <source>
        <dbReference type="PROSITE-ProRule" id="PRU00107"/>
    </source>
</evidence>
<evidence type="ECO:0000255" key="7">
    <source>
        <dbReference type="PROSITE-ProRule" id="PRU00140"/>
    </source>
</evidence>
<evidence type="ECO:0000255" key="8">
    <source>
        <dbReference type="PROSITE-ProRule" id="PRU00141"/>
    </source>
</evidence>
<evidence type="ECO:0000305" key="9"/>
<dbReference type="EC" id="2.7.13.3" evidence="1"/>
<dbReference type="EMBL" id="CP000730">
    <property type="protein sequence ID" value="ABX28065.1"/>
    <property type="molecule type" value="Genomic_DNA"/>
</dbReference>
<dbReference type="RefSeq" id="WP_000871607.1">
    <property type="nucleotide sequence ID" value="NC_010079.1"/>
</dbReference>
<dbReference type="SMR" id="A8YYU2"/>
<dbReference type="KEGG" id="sax:USA300HOU_0019"/>
<dbReference type="HOGENOM" id="CLU_000445_89_2_9"/>
<dbReference type="GO" id="GO:0005886">
    <property type="term" value="C:plasma membrane"/>
    <property type="evidence" value="ECO:0007669"/>
    <property type="project" value="UniProtKB-SubCell"/>
</dbReference>
<dbReference type="GO" id="GO:0005524">
    <property type="term" value="F:ATP binding"/>
    <property type="evidence" value="ECO:0007669"/>
    <property type="project" value="UniProtKB-KW"/>
</dbReference>
<dbReference type="GO" id="GO:0046872">
    <property type="term" value="F:metal ion binding"/>
    <property type="evidence" value="ECO:0007669"/>
    <property type="project" value="UniProtKB-KW"/>
</dbReference>
<dbReference type="GO" id="GO:0000156">
    <property type="term" value="F:phosphorelay response regulator activity"/>
    <property type="evidence" value="ECO:0007669"/>
    <property type="project" value="TreeGrafter"/>
</dbReference>
<dbReference type="GO" id="GO:0000155">
    <property type="term" value="F:phosphorelay sensor kinase activity"/>
    <property type="evidence" value="ECO:0007669"/>
    <property type="project" value="InterPro"/>
</dbReference>
<dbReference type="GO" id="GO:0030295">
    <property type="term" value="F:protein kinase activator activity"/>
    <property type="evidence" value="ECO:0007669"/>
    <property type="project" value="TreeGrafter"/>
</dbReference>
<dbReference type="GO" id="GO:0007234">
    <property type="term" value="P:osmosensory signaling via phosphorelay pathway"/>
    <property type="evidence" value="ECO:0007669"/>
    <property type="project" value="TreeGrafter"/>
</dbReference>
<dbReference type="CDD" id="cd06225">
    <property type="entry name" value="HAMP"/>
    <property type="match status" value="1"/>
</dbReference>
<dbReference type="CDD" id="cd00075">
    <property type="entry name" value="HATPase"/>
    <property type="match status" value="1"/>
</dbReference>
<dbReference type="CDD" id="cd00082">
    <property type="entry name" value="HisKA"/>
    <property type="match status" value="1"/>
</dbReference>
<dbReference type="CDD" id="cd00130">
    <property type="entry name" value="PAS"/>
    <property type="match status" value="1"/>
</dbReference>
<dbReference type="FunFam" id="1.10.8.500:FF:000001">
    <property type="entry name" value="Cell wall metabolism sensor histidine kinase"/>
    <property type="match status" value="1"/>
</dbReference>
<dbReference type="FunFam" id="3.30.450.20:FF:000037">
    <property type="entry name" value="Cell wall metabolism sensor histidine kinase"/>
    <property type="match status" value="1"/>
</dbReference>
<dbReference type="FunFam" id="3.30.565.10:FF:000006">
    <property type="entry name" value="Sensor histidine kinase WalK"/>
    <property type="match status" value="1"/>
</dbReference>
<dbReference type="FunFam" id="1.10.287.130:FF:000001">
    <property type="entry name" value="Two-component sensor histidine kinase"/>
    <property type="match status" value="1"/>
</dbReference>
<dbReference type="Gene3D" id="1.10.287.130">
    <property type="match status" value="1"/>
</dbReference>
<dbReference type="Gene3D" id="1.10.8.500">
    <property type="entry name" value="HAMP domain in histidine kinase"/>
    <property type="match status" value="1"/>
</dbReference>
<dbReference type="Gene3D" id="3.30.565.10">
    <property type="entry name" value="Histidine kinase-like ATPase, C-terminal domain"/>
    <property type="match status" value="1"/>
</dbReference>
<dbReference type="Gene3D" id="3.30.450.20">
    <property type="entry name" value="PAS domain"/>
    <property type="match status" value="2"/>
</dbReference>
<dbReference type="InterPro" id="IPR003660">
    <property type="entry name" value="HAMP_dom"/>
</dbReference>
<dbReference type="InterPro" id="IPR036890">
    <property type="entry name" value="HATPase_C_sf"/>
</dbReference>
<dbReference type="InterPro" id="IPR005467">
    <property type="entry name" value="His_kinase_dom"/>
</dbReference>
<dbReference type="InterPro" id="IPR003661">
    <property type="entry name" value="HisK_dim/P_dom"/>
</dbReference>
<dbReference type="InterPro" id="IPR036097">
    <property type="entry name" value="HisK_dim/P_sf"/>
</dbReference>
<dbReference type="InterPro" id="IPR052545">
    <property type="entry name" value="Light-responsive_reg"/>
</dbReference>
<dbReference type="InterPro" id="IPR000014">
    <property type="entry name" value="PAS"/>
</dbReference>
<dbReference type="InterPro" id="IPR000700">
    <property type="entry name" value="PAS-assoc_C"/>
</dbReference>
<dbReference type="InterPro" id="IPR035965">
    <property type="entry name" value="PAS-like_dom_sf"/>
</dbReference>
<dbReference type="InterPro" id="IPR049814">
    <property type="entry name" value="Resp_reg_WalK"/>
</dbReference>
<dbReference type="InterPro" id="IPR029151">
    <property type="entry name" value="Sensor-like_sf"/>
</dbReference>
<dbReference type="InterPro" id="IPR004358">
    <property type="entry name" value="Sig_transdc_His_kin-like_C"/>
</dbReference>
<dbReference type="NCBIfam" id="NF033092">
    <property type="entry name" value="HK_WalK"/>
    <property type="match status" value="1"/>
</dbReference>
<dbReference type="NCBIfam" id="TIGR00229">
    <property type="entry name" value="sensory_box"/>
    <property type="match status" value="1"/>
</dbReference>
<dbReference type="PANTHER" id="PTHR42878:SF7">
    <property type="entry name" value="SENSOR HISTIDINE KINASE GLRK"/>
    <property type="match status" value="1"/>
</dbReference>
<dbReference type="PANTHER" id="PTHR42878">
    <property type="entry name" value="TWO-COMPONENT HISTIDINE KINASE"/>
    <property type="match status" value="1"/>
</dbReference>
<dbReference type="Pfam" id="PF23846">
    <property type="entry name" value="Cache_WalK"/>
    <property type="match status" value="1"/>
</dbReference>
<dbReference type="Pfam" id="PF00672">
    <property type="entry name" value="HAMP"/>
    <property type="match status" value="1"/>
</dbReference>
<dbReference type="Pfam" id="PF02518">
    <property type="entry name" value="HATPase_c"/>
    <property type="match status" value="1"/>
</dbReference>
<dbReference type="Pfam" id="PF00512">
    <property type="entry name" value="HisKA"/>
    <property type="match status" value="1"/>
</dbReference>
<dbReference type="Pfam" id="PF13426">
    <property type="entry name" value="PAS_9"/>
    <property type="match status" value="1"/>
</dbReference>
<dbReference type="PRINTS" id="PR00344">
    <property type="entry name" value="BCTRLSENSOR"/>
</dbReference>
<dbReference type="SMART" id="SM00304">
    <property type="entry name" value="HAMP"/>
    <property type="match status" value="1"/>
</dbReference>
<dbReference type="SMART" id="SM00387">
    <property type="entry name" value="HATPase_c"/>
    <property type="match status" value="1"/>
</dbReference>
<dbReference type="SMART" id="SM00388">
    <property type="entry name" value="HisKA"/>
    <property type="match status" value="1"/>
</dbReference>
<dbReference type="SMART" id="SM00091">
    <property type="entry name" value="PAS"/>
    <property type="match status" value="1"/>
</dbReference>
<dbReference type="SUPFAM" id="SSF55874">
    <property type="entry name" value="ATPase domain of HSP90 chaperone/DNA topoisomerase II/histidine kinase"/>
    <property type="match status" value="1"/>
</dbReference>
<dbReference type="SUPFAM" id="SSF158472">
    <property type="entry name" value="HAMP domain-like"/>
    <property type="match status" value="1"/>
</dbReference>
<dbReference type="SUPFAM" id="SSF47384">
    <property type="entry name" value="Homodimeric domain of signal transducing histidine kinase"/>
    <property type="match status" value="1"/>
</dbReference>
<dbReference type="SUPFAM" id="SSF55785">
    <property type="entry name" value="PYP-like sensor domain (PAS domain)"/>
    <property type="match status" value="1"/>
</dbReference>
<dbReference type="SUPFAM" id="SSF103190">
    <property type="entry name" value="Sensory domain-like"/>
    <property type="match status" value="1"/>
</dbReference>
<dbReference type="PROSITE" id="PS50885">
    <property type="entry name" value="HAMP"/>
    <property type="match status" value="1"/>
</dbReference>
<dbReference type="PROSITE" id="PS50109">
    <property type="entry name" value="HIS_KIN"/>
    <property type="match status" value="1"/>
</dbReference>
<dbReference type="PROSITE" id="PS50113">
    <property type="entry name" value="PAC"/>
    <property type="match status" value="1"/>
</dbReference>
<dbReference type="PROSITE" id="PS50112">
    <property type="entry name" value="PAS"/>
    <property type="match status" value="1"/>
</dbReference>
<protein>
    <recommendedName>
        <fullName evidence="9">Sensor protein kinase WalK</fullName>
        <ecNumber evidence="1">2.7.13.3</ecNumber>
    </recommendedName>
</protein>
<feature type="chain" id="PRO_0000353063" description="Sensor protein kinase WalK">
    <location>
        <begin position="1"/>
        <end position="608"/>
    </location>
</feature>
<feature type="transmembrane region" description="Helical" evidence="4">
    <location>
        <begin position="14"/>
        <end position="34"/>
    </location>
</feature>
<feature type="transmembrane region" description="Helical" evidence="4">
    <location>
        <begin position="183"/>
        <end position="203"/>
    </location>
</feature>
<feature type="domain" description="HAMP" evidence="5">
    <location>
        <begin position="204"/>
        <end position="256"/>
    </location>
</feature>
<feature type="domain" description="PAS" evidence="7">
    <location>
        <begin position="261"/>
        <end position="331"/>
    </location>
</feature>
<feature type="domain" description="PAC" evidence="8">
    <location>
        <begin position="314"/>
        <end position="378"/>
    </location>
</feature>
<feature type="domain" description="Histidine kinase" evidence="6">
    <location>
        <begin position="382"/>
        <end position="600"/>
    </location>
</feature>
<feature type="binding site" evidence="3">
    <location>
        <position position="271"/>
    </location>
    <ligand>
        <name>Zn(2+)</name>
        <dbReference type="ChEBI" id="CHEBI:29105"/>
    </ligand>
</feature>
<feature type="binding site" evidence="3">
    <location>
        <position position="274"/>
    </location>
    <ligand>
        <name>Zn(2+)</name>
        <dbReference type="ChEBI" id="CHEBI:29105"/>
    </ligand>
</feature>
<feature type="binding site" evidence="3">
    <location>
        <position position="364"/>
    </location>
    <ligand>
        <name>Zn(2+)</name>
        <dbReference type="ChEBI" id="CHEBI:29105"/>
    </ligand>
</feature>
<feature type="binding site" evidence="3">
    <location>
        <position position="368"/>
    </location>
    <ligand>
        <name>Zn(2+)</name>
        <dbReference type="ChEBI" id="CHEBI:29105"/>
    </ligand>
</feature>
<feature type="modified residue" description="Phosphohistidine; by autocatalysis" evidence="6">
    <location>
        <position position="385"/>
    </location>
</feature>
<organism>
    <name type="scientific">Staphylococcus aureus (strain USA300 / TCH1516)</name>
    <dbReference type="NCBI Taxonomy" id="451516"/>
    <lineage>
        <taxon>Bacteria</taxon>
        <taxon>Bacillati</taxon>
        <taxon>Bacillota</taxon>
        <taxon>Bacilli</taxon>
        <taxon>Bacillales</taxon>
        <taxon>Staphylococcaceae</taxon>
        <taxon>Staphylococcus</taxon>
    </lineage>
</organism>
<sequence length="608" mass="69924">MKWLKQLQSLHTKLVIVYVLLIIIGMQIIGLYFTNNLEKELLDNFKKNITQYAKQLEISIEKVYDEKGSVNAQKDIQNLLSEYANRQEIGEIRFIDKDQIIIATTKQSNRSLINQKANDSSVQKALSLGQSNDHLILKDYGGGKDRVWVYNIPVKVDKKVIGNIYIESKINDVYNQLNNINQIFIVGTAISLLITVILGFFIARTITKPITDMRNQTVEMSRGNYTQRVKIYGNDEIGELALAFNNLSKRVQEAQANTESEKRRLDSVITHMSDGIIATDRRGRIRIVNDMALKMLGMAKEDIIGYYMLSVLSLEDEFKLEEIQENNDSFLLDLNEEEGLIARVNFSTIVQETGFVTGYIAVLHDVTEQQQVERERREFVANVSHELRTPLTSMNSYIEALEEGAWKDEELAPQFLSVTREETERMIRLVNDLLQLSKMDNESDQINKEIIDFNMFINKIINRHEMSAKDTTFIRDIPKKTIFTEFDPDKMTQVFDNVITNAMKYSRGDKRVEFHVKQNPLYNRMTIRIKDNGIGIPINKVDKIFDRFYRVDKARTRKMGGTGLGLAISKEIVEAHNGRIWANSVEGQGTSIFITLPCEVIEDGDWDE</sequence>
<keyword id="KW-0067">ATP-binding</keyword>
<keyword id="KW-1003">Cell membrane</keyword>
<keyword id="KW-0418">Kinase</keyword>
<keyword id="KW-0472">Membrane</keyword>
<keyword id="KW-0479">Metal-binding</keyword>
<keyword id="KW-0547">Nucleotide-binding</keyword>
<keyword id="KW-0597">Phosphoprotein</keyword>
<keyword id="KW-0808">Transferase</keyword>
<keyword id="KW-0812">Transmembrane</keyword>
<keyword id="KW-1133">Transmembrane helix</keyword>
<keyword id="KW-0902">Two-component regulatory system</keyword>
<keyword id="KW-0862">Zinc</keyword>
<comment type="function">
    <text evidence="3">Member of the two-component regulatory system WalK/WalR that regulates genes involved in cell wall metabolism, virulence regulation, biofilm production, oxidative stress resistance and antibiotic resistance via direct or indirect regulation of autolysins. Functions as a sensor protein kinase which is autophosphorylated at a histidine residue in the dimerization domain and transfers its phosphate group to the conserved aspartic acid residue in the regulatory domain of WalR. In turn, WalR binds to the upstream promoter regions of the target genes to positively and negatively regulate their expression.</text>
</comment>
<comment type="catalytic activity">
    <reaction evidence="3">
        <text>ATP + protein L-histidine = ADP + protein N-phospho-L-histidine.</text>
        <dbReference type="EC" id="2.7.13.3"/>
    </reaction>
</comment>
<comment type="activity regulation">
    <text evidence="3">By zinc. Zinc-binding negatively regulates WalK kinase activity and thus autophosphorylation.</text>
</comment>
<comment type="subunit">
    <text evidence="2">Forms homodimers. Forms homooligomers.</text>
</comment>
<comment type="subcellular location">
    <subcellularLocation>
        <location evidence="9">Cell membrane</location>
        <topology evidence="4">Multi-pass membrane protein</topology>
    </subcellularLocation>
</comment>
<comment type="PTM">
    <text evidence="3">Autophosphorylated.</text>
</comment>
<gene>
    <name type="primary">walK</name>
    <name type="ordered locus">USA300HOU_0019</name>
</gene>